<comment type="function">
    <text>This protein binds a wide variety of chemical odorants.</text>
</comment>
<comment type="subunit">
    <text>Homodimer.</text>
</comment>
<comment type="subcellular location">
    <subcellularLocation>
        <location>Secreted</location>
    </subcellularLocation>
</comment>
<comment type="similarity">
    <text evidence="1">Belongs to the calycin superfamily. Lipocalin family.</text>
</comment>
<feature type="chain" id="PRO_0000201024" description="Odorant-binding protein">
    <location>
        <begin position="1"/>
        <end position="159"/>
    </location>
</feature>
<feature type="helix" evidence="2">
    <location>
        <begin position="11"/>
        <end position="13"/>
    </location>
</feature>
<feature type="strand" evidence="4">
    <location>
        <begin position="18"/>
        <end position="26"/>
    </location>
</feature>
<feature type="helix" evidence="4">
    <location>
        <begin position="27"/>
        <end position="29"/>
    </location>
</feature>
<feature type="strand" evidence="4">
    <location>
        <begin position="39"/>
        <end position="46"/>
    </location>
</feature>
<feature type="turn" evidence="4">
    <location>
        <begin position="47"/>
        <end position="50"/>
    </location>
</feature>
<feature type="strand" evidence="4">
    <location>
        <begin position="51"/>
        <end position="60"/>
    </location>
</feature>
<feature type="strand" evidence="4">
    <location>
        <begin position="63"/>
        <end position="73"/>
    </location>
</feature>
<feature type="strand" evidence="4">
    <location>
        <begin position="79"/>
        <end position="94"/>
    </location>
</feature>
<feature type="strand" evidence="4">
    <location>
        <begin position="96"/>
        <end position="106"/>
    </location>
</feature>
<feature type="strand" evidence="4">
    <location>
        <begin position="112"/>
        <end position="120"/>
    </location>
</feature>
<feature type="helix" evidence="4">
    <location>
        <begin position="126"/>
        <end position="138"/>
    </location>
</feature>
<feature type="helix" evidence="4">
    <location>
        <begin position="143"/>
        <end position="145"/>
    </location>
</feature>
<feature type="strand" evidence="4">
    <location>
        <begin position="146"/>
        <end position="148"/>
    </location>
</feature>
<feature type="helix" evidence="3">
    <location>
        <begin position="149"/>
        <end position="154"/>
    </location>
</feature>
<sequence>AQEEEAEQNLSELSGPWRTVYIGSTNPEKIQENGPFRTYFRELVFDDEKGTVDFYFSVKRDGKWKNVHVKATKQDDGTYVADYEGQNVFKIVSLSRTHLVAHNINVDKHGQTTELTELFVKLNVEDEDLEKFWKLTEDKGIDKKNVVNFLENEDHPHPE</sequence>
<organism>
    <name type="scientific">Bos taurus</name>
    <name type="common">Bovine</name>
    <dbReference type="NCBI Taxonomy" id="9913"/>
    <lineage>
        <taxon>Eukaryota</taxon>
        <taxon>Metazoa</taxon>
        <taxon>Chordata</taxon>
        <taxon>Craniata</taxon>
        <taxon>Vertebrata</taxon>
        <taxon>Euteleostomi</taxon>
        <taxon>Mammalia</taxon>
        <taxon>Eutheria</taxon>
        <taxon>Laurasiatheria</taxon>
        <taxon>Artiodactyla</taxon>
        <taxon>Ruminantia</taxon>
        <taxon>Pecora</taxon>
        <taxon>Bovidae</taxon>
        <taxon>Bovinae</taxon>
        <taxon>Bos</taxon>
    </lineage>
</organism>
<accession>P07435</accession>
<protein>
    <recommendedName>
        <fullName>Odorant-binding protein</fullName>
        <shortName>OBP</shortName>
    </recommendedName>
    <alternativeName>
        <fullName>Olfactory mucosa pyrazine-binding protein</fullName>
    </alternativeName>
</protein>
<reference key="1">
    <citation type="journal article" date="1989" name="Eur. J. Biochem.">
        <title>Complete amino acid sequence of pyrazine-binding protein from cow nasal mucosa.</title>
        <authorList>
            <person name="Tirindelli R."/>
            <person name="Keen J.N."/>
            <person name="Cavaggioni A."/>
            <person name="Eliopoulos E.E."/>
            <person name="Findlay J.B.C."/>
        </authorList>
    </citation>
    <scope>PROTEIN SEQUENCE</scope>
</reference>
<reference key="2">
    <citation type="journal article" date="1987" name="FEBS Lett.">
        <title>Homology between the pyrazine-binding protein from nasal mucosa and major urinary proteins.</title>
        <authorList>
            <person name="Cavaggioni A."/>
            <person name="Sorbi R.T."/>
            <person name="Keen J.N."/>
            <person name="Pappin D.J.C."/>
            <person name="Findlay J.B.C."/>
        </authorList>
    </citation>
    <scope>PROTEIN SEQUENCE OF 1-63</scope>
</reference>
<reference key="3">
    <citation type="journal article" date="1992" name="Biopolymers">
        <title>Three-dimensional structure and active site of three hydrophobic molecule-binding proteins with significant amino acid sequence similarity.</title>
        <authorList>
            <person name="Monaco H.L."/>
            <person name="Zanotti G."/>
        </authorList>
    </citation>
    <scope>COMPARISON OF X-RAY STRUCTURES</scope>
</reference>
<reference key="4">
    <citation type="journal article" date="1996" name="Nat. Struct. Biol.">
        <title>The three-dimensional structure of bovine odorant binding protein and its mechanism of odor recognition.</title>
        <authorList>
            <person name="Bianchet M.A."/>
            <person name="Bains G."/>
            <person name="Pelosi P."/>
            <person name="Pevsner J."/>
            <person name="Snyder S.H."/>
            <person name="Monaco H.L."/>
            <person name="Amzel L.M."/>
        </authorList>
    </citation>
    <scope>X-RAY CRYSTALLOGRAPHY (2.0 ANGSTROMS)</scope>
</reference>
<reference key="5">
    <citation type="journal article" date="1996" name="Nat. Struct. Biol.">
        <title>Domain swapping creates a third putative combining site in bovine odorant binding protein dimer.</title>
        <authorList>
            <person name="Tegoni M."/>
            <person name="Ramoni R."/>
            <person name="Bignetti E."/>
            <person name="Spinelli S."/>
            <person name="Cambillau C."/>
        </authorList>
    </citation>
    <scope>X-RAY CRYSTALLOGRAPHY (2.0 ANGSTROMS)</scope>
</reference>
<name>OBP_BOVIN</name>
<keyword id="KW-0002">3D-structure</keyword>
<keyword id="KW-0903">Direct protein sequencing</keyword>
<keyword id="KW-0552">Olfaction</keyword>
<keyword id="KW-1185">Reference proteome</keyword>
<keyword id="KW-0964">Secreted</keyword>
<keyword id="KW-0716">Sensory transduction</keyword>
<keyword id="KW-0813">Transport</keyword>
<evidence type="ECO:0000305" key="1"/>
<evidence type="ECO:0007829" key="2">
    <source>
        <dbReference type="PDB" id="1GT1"/>
    </source>
</evidence>
<evidence type="ECO:0007829" key="3">
    <source>
        <dbReference type="PDB" id="1PBO"/>
    </source>
</evidence>
<evidence type="ECO:0007829" key="4">
    <source>
        <dbReference type="PDB" id="2HLV"/>
    </source>
</evidence>
<proteinExistence type="evidence at protein level"/>
<dbReference type="PIR" id="S06843">
    <property type="entry name" value="S06843"/>
</dbReference>
<dbReference type="PDB" id="1G85">
    <property type="method" value="X-ray"/>
    <property type="resolution" value="1.80 A"/>
    <property type="chains" value="A/B=1-159"/>
</dbReference>
<dbReference type="PDB" id="1GT1">
    <property type="method" value="X-ray"/>
    <property type="resolution" value="1.71 A"/>
    <property type="chains" value="A/B=1-159"/>
</dbReference>
<dbReference type="PDB" id="1GT3">
    <property type="method" value="X-ray"/>
    <property type="resolution" value="1.80 A"/>
    <property type="chains" value="A/B=1-159"/>
</dbReference>
<dbReference type="PDB" id="1GT4">
    <property type="method" value="X-ray"/>
    <property type="resolution" value="2.10 A"/>
    <property type="chains" value="A/B=1-159"/>
</dbReference>
<dbReference type="PDB" id="1GT5">
    <property type="method" value="X-ray"/>
    <property type="resolution" value="2.08 A"/>
    <property type="chains" value="A/B=1-159"/>
</dbReference>
<dbReference type="PDB" id="1HN2">
    <property type="method" value="X-ray"/>
    <property type="resolution" value="1.80 A"/>
    <property type="chains" value="A/B=1-159"/>
</dbReference>
<dbReference type="PDB" id="1OBP">
    <property type="method" value="X-ray"/>
    <property type="resolution" value="2.00 A"/>
    <property type="chains" value="A/B=1-159"/>
</dbReference>
<dbReference type="PDB" id="1PBO">
    <property type="method" value="X-ray"/>
    <property type="resolution" value="2.20 A"/>
    <property type="chains" value="A/B=1-159"/>
</dbReference>
<dbReference type="PDB" id="2HLV">
    <property type="method" value="X-ray"/>
    <property type="resolution" value="1.65 A"/>
    <property type="chains" value="A=1-159"/>
</dbReference>
<dbReference type="PDBsum" id="1G85"/>
<dbReference type="PDBsum" id="1GT1"/>
<dbReference type="PDBsum" id="1GT3"/>
<dbReference type="PDBsum" id="1GT4"/>
<dbReference type="PDBsum" id="1GT5"/>
<dbReference type="PDBsum" id="1HN2"/>
<dbReference type="PDBsum" id="1OBP"/>
<dbReference type="PDBsum" id="1PBO"/>
<dbReference type="PDBsum" id="2HLV"/>
<dbReference type="SMR" id="P07435"/>
<dbReference type="STRING" id="9913.ENSBTAP00000022593"/>
<dbReference type="PaxDb" id="9913-ENSBTAP00000022593"/>
<dbReference type="eggNOG" id="ENOG502TDZD">
    <property type="taxonomic scope" value="Eukaryota"/>
</dbReference>
<dbReference type="InParanoid" id="P07435"/>
<dbReference type="EvolutionaryTrace" id="P07435"/>
<dbReference type="Proteomes" id="UP000009136">
    <property type="component" value="Unplaced"/>
</dbReference>
<dbReference type="GO" id="GO:0005615">
    <property type="term" value="C:extracellular space"/>
    <property type="evidence" value="ECO:0000318"/>
    <property type="project" value="GO_Central"/>
</dbReference>
<dbReference type="GO" id="GO:0005549">
    <property type="term" value="F:odorant binding"/>
    <property type="evidence" value="ECO:0000318"/>
    <property type="project" value="GO_Central"/>
</dbReference>
<dbReference type="GO" id="GO:0036094">
    <property type="term" value="F:small molecule binding"/>
    <property type="evidence" value="ECO:0007669"/>
    <property type="project" value="InterPro"/>
</dbReference>
<dbReference type="GO" id="GO:0007608">
    <property type="term" value="P:sensory perception of smell"/>
    <property type="evidence" value="ECO:0007669"/>
    <property type="project" value="UniProtKB-KW"/>
</dbReference>
<dbReference type="Gene3D" id="2.40.128.20">
    <property type="match status" value="1"/>
</dbReference>
<dbReference type="InterPro" id="IPR012674">
    <property type="entry name" value="Calycin"/>
</dbReference>
<dbReference type="InterPro" id="IPR002345">
    <property type="entry name" value="Lipocalin"/>
</dbReference>
<dbReference type="InterPro" id="IPR022272">
    <property type="entry name" value="Lipocalin_CS"/>
</dbReference>
<dbReference type="InterPro" id="IPR000566">
    <property type="entry name" value="Lipocln_cytosolic_FA-bd_dom"/>
</dbReference>
<dbReference type="InterPro" id="IPR002448">
    <property type="entry name" value="OBP-like"/>
</dbReference>
<dbReference type="PANTHER" id="PTHR11430">
    <property type="entry name" value="LIPOCALIN"/>
    <property type="match status" value="1"/>
</dbReference>
<dbReference type="PANTHER" id="PTHR11430:SF65">
    <property type="entry name" value="ODORANT-BINDING PROTEIN 1A-RELATED"/>
    <property type="match status" value="1"/>
</dbReference>
<dbReference type="Pfam" id="PF00061">
    <property type="entry name" value="Lipocalin"/>
    <property type="match status" value="1"/>
</dbReference>
<dbReference type="PRINTS" id="PR01173">
    <property type="entry name" value="ODORANTBNDNG"/>
</dbReference>
<dbReference type="SUPFAM" id="SSF50814">
    <property type="entry name" value="Lipocalins"/>
    <property type="match status" value="1"/>
</dbReference>
<dbReference type="PROSITE" id="PS00213">
    <property type="entry name" value="LIPOCALIN"/>
    <property type="match status" value="1"/>
</dbReference>